<proteinExistence type="inferred from homology"/>
<keyword id="KW-0963">Cytoplasm</keyword>
<keyword id="KW-0255">Endonuclease</keyword>
<keyword id="KW-0378">Hydrolase</keyword>
<keyword id="KW-0464">Manganese</keyword>
<keyword id="KW-0479">Metal-binding</keyword>
<keyword id="KW-0540">Nuclease</keyword>
<keyword id="KW-1185">Reference proteome</keyword>
<sequence length="185" mass="20943">MKICGIDEAGRGPLAGPLHIAGCILNKQIEGLKDSKKLSEKRREILYEEIIKNSTYKIVKFSAAQIDKFGLSKCLKLGLNELVDFFAPFEVKIIFDGNSKFGAEGFETMVKADDKIKEVSAASILAKVSRDRVMRNFDIKFPFYDFAKNKGYGSKAHIEAIQKYGYCEIHRKSFHLKHLQGILEF</sequence>
<accession>A7I0I5</accession>
<feature type="chain" id="PRO_0000334871" description="Ribonuclease HII">
    <location>
        <begin position="1"/>
        <end position="185"/>
    </location>
</feature>
<feature type="domain" description="RNase H type-2" evidence="2">
    <location>
        <begin position="1"/>
        <end position="185"/>
    </location>
</feature>
<feature type="binding site" evidence="1">
    <location>
        <position position="7"/>
    </location>
    <ligand>
        <name>a divalent metal cation</name>
        <dbReference type="ChEBI" id="CHEBI:60240"/>
    </ligand>
</feature>
<feature type="binding site" evidence="1">
    <location>
        <position position="8"/>
    </location>
    <ligand>
        <name>a divalent metal cation</name>
        <dbReference type="ChEBI" id="CHEBI:60240"/>
    </ligand>
</feature>
<feature type="binding site" evidence="1">
    <location>
        <position position="96"/>
    </location>
    <ligand>
        <name>a divalent metal cation</name>
        <dbReference type="ChEBI" id="CHEBI:60240"/>
    </ligand>
</feature>
<protein>
    <recommendedName>
        <fullName evidence="1">Ribonuclease HII</fullName>
        <shortName evidence="1">RNase HII</shortName>
        <ecNumber evidence="1">3.1.26.4</ecNumber>
    </recommendedName>
</protein>
<organism>
    <name type="scientific">Campylobacter hominis (strain ATCC BAA-381 / DSM 21671 / CCUG 45161 / LMG 19568 / NCTC 13146 / CH001A)</name>
    <dbReference type="NCBI Taxonomy" id="360107"/>
    <lineage>
        <taxon>Bacteria</taxon>
        <taxon>Pseudomonadati</taxon>
        <taxon>Campylobacterota</taxon>
        <taxon>Epsilonproteobacteria</taxon>
        <taxon>Campylobacterales</taxon>
        <taxon>Campylobacteraceae</taxon>
        <taxon>Campylobacter</taxon>
    </lineage>
</organism>
<gene>
    <name evidence="1" type="primary">rnhB</name>
    <name type="ordered locus">CHAB381_0430</name>
</gene>
<evidence type="ECO:0000255" key="1">
    <source>
        <dbReference type="HAMAP-Rule" id="MF_00052"/>
    </source>
</evidence>
<evidence type="ECO:0000255" key="2">
    <source>
        <dbReference type="PROSITE-ProRule" id="PRU01319"/>
    </source>
</evidence>
<comment type="function">
    <text evidence="1">Endonuclease that specifically degrades the RNA of RNA-DNA hybrids.</text>
</comment>
<comment type="catalytic activity">
    <reaction evidence="1">
        <text>Endonucleolytic cleavage to 5'-phosphomonoester.</text>
        <dbReference type="EC" id="3.1.26.4"/>
    </reaction>
</comment>
<comment type="cofactor">
    <cofactor evidence="1">
        <name>Mn(2+)</name>
        <dbReference type="ChEBI" id="CHEBI:29035"/>
    </cofactor>
    <cofactor evidence="1">
        <name>Mg(2+)</name>
        <dbReference type="ChEBI" id="CHEBI:18420"/>
    </cofactor>
    <text evidence="1">Manganese or magnesium. Binds 1 divalent metal ion per monomer in the absence of substrate. May bind a second metal ion after substrate binding.</text>
</comment>
<comment type="subcellular location">
    <subcellularLocation>
        <location evidence="1">Cytoplasm</location>
    </subcellularLocation>
</comment>
<comment type="similarity">
    <text evidence="1">Belongs to the RNase HII family.</text>
</comment>
<reference key="1">
    <citation type="submission" date="2007-07" db="EMBL/GenBank/DDBJ databases">
        <title>Complete genome sequence of Campylobacter hominis ATCC BAA-381, a commensal isolated from the human gastrointestinal tract.</title>
        <authorList>
            <person name="Fouts D.E."/>
            <person name="Mongodin E.F."/>
            <person name="Puiu D."/>
            <person name="Sebastian Y."/>
            <person name="Miller W.G."/>
            <person name="Mandrell R.E."/>
            <person name="Nelson K.E."/>
        </authorList>
    </citation>
    <scope>NUCLEOTIDE SEQUENCE [LARGE SCALE GENOMIC DNA]</scope>
    <source>
        <strain>ATCC BAA-381 / DSM 21671 / CCUG 45161 / LMG 19568 / NCTC 13146 / CH001A</strain>
    </source>
</reference>
<dbReference type="EC" id="3.1.26.4" evidence="1"/>
<dbReference type="EMBL" id="CP000776">
    <property type="protein sequence ID" value="ABS51460.1"/>
    <property type="molecule type" value="Genomic_DNA"/>
</dbReference>
<dbReference type="RefSeq" id="WP_012108309.1">
    <property type="nucleotide sequence ID" value="NC_009714.1"/>
</dbReference>
<dbReference type="SMR" id="A7I0I5"/>
<dbReference type="STRING" id="360107.CHAB381_0430"/>
<dbReference type="KEGG" id="cha:CHAB381_0430"/>
<dbReference type="eggNOG" id="COG0164">
    <property type="taxonomic scope" value="Bacteria"/>
</dbReference>
<dbReference type="HOGENOM" id="CLU_036532_3_1_7"/>
<dbReference type="OrthoDB" id="9803420at2"/>
<dbReference type="Proteomes" id="UP000002407">
    <property type="component" value="Chromosome"/>
</dbReference>
<dbReference type="GO" id="GO:0005737">
    <property type="term" value="C:cytoplasm"/>
    <property type="evidence" value="ECO:0007669"/>
    <property type="project" value="UniProtKB-SubCell"/>
</dbReference>
<dbReference type="GO" id="GO:0032299">
    <property type="term" value="C:ribonuclease H2 complex"/>
    <property type="evidence" value="ECO:0007669"/>
    <property type="project" value="TreeGrafter"/>
</dbReference>
<dbReference type="GO" id="GO:0030145">
    <property type="term" value="F:manganese ion binding"/>
    <property type="evidence" value="ECO:0007669"/>
    <property type="project" value="UniProtKB-UniRule"/>
</dbReference>
<dbReference type="GO" id="GO:0003723">
    <property type="term" value="F:RNA binding"/>
    <property type="evidence" value="ECO:0007669"/>
    <property type="project" value="InterPro"/>
</dbReference>
<dbReference type="GO" id="GO:0004523">
    <property type="term" value="F:RNA-DNA hybrid ribonuclease activity"/>
    <property type="evidence" value="ECO:0007669"/>
    <property type="project" value="UniProtKB-UniRule"/>
</dbReference>
<dbReference type="GO" id="GO:0043137">
    <property type="term" value="P:DNA replication, removal of RNA primer"/>
    <property type="evidence" value="ECO:0007669"/>
    <property type="project" value="TreeGrafter"/>
</dbReference>
<dbReference type="GO" id="GO:0006298">
    <property type="term" value="P:mismatch repair"/>
    <property type="evidence" value="ECO:0007669"/>
    <property type="project" value="TreeGrafter"/>
</dbReference>
<dbReference type="CDD" id="cd07182">
    <property type="entry name" value="RNase_HII_bacteria_HII_like"/>
    <property type="match status" value="1"/>
</dbReference>
<dbReference type="Gene3D" id="3.30.420.10">
    <property type="entry name" value="Ribonuclease H-like superfamily/Ribonuclease H"/>
    <property type="match status" value="1"/>
</dbReference>
<dbReference type="HAMAP" id="MF_00052_B">
    <property type="entry name" value="RNase_HII_B"/>
    <property type="match status" value="1"/>
</dbReference>
<dbReference type="InterPro" id="IPR022898">
    <property type="entry name" value="RNase_HII"/>
</dbReference>
<dbReference type="InterPro" id="IPR001352">
    <property type="entry name" value="RNase_HII/HIII"/>
</dbReference>
<dbReference type="InterPro" id="IPR024567">
    <property type="entry name" value="RNase_HII/HIII_dom"/>
</dbReference>
<dbReference type="InterPro" id="IPR012337">
    <property type="entry name" value="RNaseH-like_sf"/>
</dbReference>
<dbReference type="InterPro" id="IPR036397">
    <property type="entry name" value="RNaseH_sf"/>
</dbReference>
<dbReference type="NCBIfam" id="NF000595">
    <property type="entry name" value="PRK00015.1-3"/>
    <property type="match status" value="1"/>
</dbReference>
<dbReference type="PANTHER" id="PTHR10954">
    <property type="entry name" value="RIBONUCLEASE H2 SUBUNIT A"/>
    <property type="match status" value="1"/>
</dbReference>
<dbReference type="PANTHER" id="PTHR10954:SF18">
    <property type="entry name" value="RIBONUCLEASE HII"/>
    <property type="match status" value="1"/>
</dbReference>
<dbReference type="Pfam" id="PF01351">
    <property type="entry name" value="RNase_HII"/>
    <property type="match status" value="1"/>
</dbReference>
<dbReference type="SUPFAM" id="SSF53098">
    <property type="entry name" value="Ribonuclease H-like"/>
    <property type="match status" value="1"/>
</dbReference>
<dbReference type="PROSITE" id="PS51975">
    <property type="entry name" value="RNASE_H_2"/>
    <property type="match status" value="1"/>
</dbReference>
<name>RNH2_CAMHC</name>